<dbReference type="EMBL" id="CP001600">
    <property type="protein sequence ID" value="ACR70877.1"/>
    <property type="molecule type" value="Genomic_DNA"/>
</dbReference>
<dbReference type="RefSeq" id="WP_015872915.1">
    <property type="nucleotide sequence ID" value="NZ_CP169062.1"/>
</dbReference>
<dbReference type="SMR" id="C5BB35"/>
<dbReference type="STRING" id="67780.B6E78_10355"/>
<dbReference type="KEGG" id="eic:NT01EI_3750"/>
<dbReference type="PATRIC" id="fig|634503.3.peg.3350"/>
<dbReference type="HOGENOM" id="CLU_019375_7_0_6"/>
<dbReference type="OrthoDB" id="9766690at2"/>
<dbReference type="Proteomes" id="UP000001485">
    <property type="component" value="Chromosome"/>
</dbReference>
<dbReference type="GO" id="GO:0005886">
    <property type="term" value="C:plasma membrane"/>
    <property type="evidence" value="ECO:0007669"/>
    <property type="project" value="UniProtKB-SubCell"/>
</dbReference>
<dbReference type="GO" id="GO:0015138">
    <property type="term" value="F:fumarate transmembrane transporter activity"/>
    <property type="evidence" value="ECO:0007669"/>
    <property type="project" value="TreeGrafter"/>
</dbReference>
<dbReference type="GO" id="GO:0015366">
    <property type="term" value="F:malate:proton symporter activity"/>
    <property type="evidence" value="ECO:0007669"/>
    <property type="project" value="TreeGrafter"/>
</dbReference>
<dbReference type="GO" id="GO:0015141">
    <property type="term" value="F:succinate transmembrane transporter activity"/>
    <property type="evidence" value="ECO:0007669"/>
    <property type="project" value="TreeGrafter"/>
</dbReference>
<dbReference type="GO" id="GO:0070778">
    <property type="term" value="P:L-aspartate transmembrane transport"/>
    <property type="evidence" value="ECO:0007669"/>
    <property type="project" value="TreeGrafter"/>
</dbReference>
<dbReference type="FunFam" id="1.10.3860.10:FF:000001">
    <property type="entry name" value="C4-dicarboxylate transport protein"/>
    <property type="match status" value="1"/>
</dbReference>
<dbReference type="Gene3D" id="1.10.3860.10">
    <property type="entry name" value="Sodium:dicarboxylate symporter"/>
    <property type="match status" value="1"/>
</dbReference>
<dbReference type="HAMAP" id="MF_01300">
    <property type="entry name" value="C4_dicarb_transport"/>
    <property type="match status" value="1"/>
</dbReference>
<dbReference type="InterPro" id="IPR023954">
    <property type="entry name" value="C4_dicarb_transport"/>
</dbReference>
<dbReference type="InterPro" id="IPR001991">
    <property type="entry name" value="Na-dicarboxylate_symporter"/>
</dbReference>
<dbReference type="InterPro" id="IPR018107">
    <property type="entry name" value="Na-dicarboxylate_symporter_CS"/>
</dbReference>
<dbReference type="InterPro" id="IPR036458">
    <property type="entry name" value="Na:dicarbo_symporter_sf"/>
</dbReference>
<dbReference type="NCBIfam" id="NF002461">
    <property type="entry name" value="PRK01663.1"/>
    <property type="match status" value="1"/>
</dbReference>
<dbReference type="NCBIfam" id="NF009587">
    <property type="entry name" value="PRK13027.1"/>
    <property type="match status" value="1"/>
</dbReference>
<dbReference type="PANTHER" id="PTHR42865:SF1">
    <property type="entry name" value="AEROBIC C4-DICARBOXYLATE TRANSPORT PROTEIN"/>
    <property type="match status" value="1"/>
</dbReference>
<dbReference type="PANTHER" id="PTHR42865">
    <property type="entry name" value="PROTON/GLUTAMATE-ASPARTATE SYMPORTER"/>
    <property type="match status" value="1"/>
</dbReference>
<dbReference type="Pfam" id="PF00375">
    <property type="entry name" value="SDF"/>
    <property type="match status" value="1"/>
</dbReference>
<dbReference type="PRINTS" id="PR00173">
    <property type="entry name" value="EDTRNSPORT"/>
</dbReference>
<dbReference type="SUPFAM" id="SSF118215">
    <property type="entry name" value="Proton glutamate symport protein"/>
    <property type="match status" value="1"/>
</dbReference>
<dbReference type="PROSITE" id="PS00713">
    <property type="entry name" value="NA_DICARBOXYL_SYMP_1"/>
    <property type="match status" value="1"/>
</dbReference>
<dbReference type="PROSITE" id="PS00714">
    <property type="entry name" value="NA_DICARBOXYL_SYMP_2"/>
    <property type="match status" value="1"/>
</dbReference>
<organism>
    <name type="scientific">Edwardsiella ictaluri (strain 93-146)</name>
    <dbReference type="NCBI Taxonomy" id="634503"/>
    <lineage>
        <taxon>Bacteria</taxon>
        <taxon>Pseudomonadati</taxon>
        <taxon>Pseudomonadota</taxon>
        <taxon>Gammaproteobacteria</taxon>
        <taxon>Enterobacterales</taxon>
        <taxon>Hafniaceae</taxon>
        <taxon>Edwardsiella</taxon>
    </lineage>
</organism>
<comment type="function">
    <text evidence="1">Responsible for the transport of dicarboxylates such as succinate, fumarate, and malate from the periplasm across the membrane.</text>
</comment>
<comment type="subcellular location">
    <subcellularLocation>
        <location evidence="1">Cell inner membrane</location>
        <topology evidence="1">Multi-pass membrane protein</topology>
    </subcellularLocation>
</comment>
<comment type="similarity">
    <text evidence="1">Belongs to the dicarboxylate/amino acid:cation symporter (DAACS) (TC 2.A.23) family.</text>
</comment>
<sequence length="426" mass="44937">MKKSIFTSLYLQVLVAITIGILLGHFYPDLGTQMKPLGDGFVKLIKMIIAPVIFCTVVTGIAGMESMKAVGRTGAIALLYFEVVSTIALIIGLVVVNILQPGVGMNVDPNALDTKAVAVYADQAAQQGIVAFLLDVIPSSVIGAFASGNILQVLLFAVMFGFALHHLGEKGQLIFNVIDSFAKVIFGVINMIMKLAPIGAFGAMAFTIGKYGVGTLVQLGQLILCFYITCALFVVLVLGSIAKATGFSIFRFIAYIKEELLIVLGTSSSESALPRMLDKMEKVGCQKSVVGLVIPTGYSFNLDGTSIYLTMAAVFIAQATNAQMDIWHQVTLLVVLLLSSKGAAGVTGSGFIVLAATLSAVGHLPVAGLALILGIDRFMSEARALTNLIGNGVATIVVAKRCRQLNEKQMNAVLGGRDSALRDPIA</sequence>
<feature type="chain" id="PRO_1000214241" description="C4-dicarboxylate transport protein">
    <location>
        <begin position="1"/>
        <end position="426"/>
    </location>
</feature>
<feature type="transmembrane region" description="Helical" evidence="1">
    <location>
        <begin position="4"/>
        <end position="24"/>
    </location>
</feature>
<feature type="transmembrane region" description="Helical" evidence="1">
    <location>
        <begin position="44"/>
        <end position="64"/>
    </location>
</feature>
<feature type="transmembrane region" description="Helical" evidence="1">
    <location>
        <begin position="76"/>
        <end position="96"/>
    </location>
</feature>
<feature type="transmembrane region" description="Helical" evidence="1">
    <location>
        <begin position="142"/>
        <end position="162"/>
    </location>
</feature>
<feature type="transmembrane region" description="Helical" evidence="1">
    <location>
        <begin position="184"/>
        <end position="204"/>
    </location>
</feature>
<feature type="transmembrane region" description="Helical" evidence="1">
    <location>
        <begin position="222"/>
        <end position="242"/>
    </location>
</feature>
<feature type="transmembrane region" description="Helical" evidence="1">
    <location>
        <begin position="326"/>
        <end position="346"/>
    </location>
</feature>
<feature type="transmembrane region" description="Helical" evidence="1">
    <location>
        <begin position="352"/>
        <end position="372"/>
    </location>
</feature>
<evidence type="ECO:0000255" key="1">
    <source>
        <dbReference type="HAMAP-Rule" id="MF_01300"/>
    </source>
</evidence>
<accession>C5BB35</accession>
<keyword id="KW-0997">Cell inner membrane</keyword>
<keyword id="KW-1003">Cell membrane</keyword>
<keyword id="KW-0472">Membrane</keyword>
<keyword id="KW-0769">Symport</keyword>
<keyword id="KW-0812">Transmembrane</keyword>
<keyword id="KW-1133">Transmembrane helix</keyword>
<keyword id="KW-0813">Transport</keyword>
<reference key="1">
    <citation type="submission" date="2009-03" db="EMBL/GenBank/DDBJ databases">
        <title>Complete genome sequence of Edwardsiella ictaluri 93-146.</title>
        <authorList>
            <person name="Williams M.L."/>
            <person name="Gillaspy A.F."/>
            <person name="Dyer D.W."/>
            <person name="Thune R.L."/>
            <person name="Waldbieser G.C."/>
            <person name="Schuster S.C."/>
            <person name="Gipson J."/>
            <person name="Zaitshik J."/>
            <person name="Landry C."/>
            <person name="Lawrence M.L."/>
        </authorList>
    </citation>
    <scope>NUCLEOTIDE SEQUENCE [LARGE SCALE GENOMIC DNA]</scope>
    <source>
        <strain>93-146</strain>
    </source>
</reference>
<protein>
    <recommendedName>
        <fullName evidence="1">C4-dicarboxylate transport protein</fullName>
    </recommendedName>
</protein>
<proteinExistence type="inferred from homology"/>
<gene>
    <name evidence="1" type="primary">dctA</name>
    <name type="ordered locus">NT01EI_3750</name>
</gene>
<name>DCTA_EDWI9</name>